<feature type="chain" id="PRO_0000360799" description="Toxin YokI">
    <location>
        <begin position="1"/>
        <end position="571"/>
    </location>
</feature>
<feature type="domain" description="LXG" evidence="2">
    <location>
        <begin position="1"/>
        <end position="235"/>
    </location>
</feature>
<feature type="coiled-coil region" evidence="1">
    <location>
        <begin position="5"/>
        <end position="39"/>
    </location>
</feature>
<feature type="coiled-coil region" evidence="1">
    <location>
        <begin position="141"/>
        <end position="192"/>
    </location>
</feature>
<keyword id="KW-0175">Coiled coil</keyword>
<keyword id="KW-0378">Hydrolase</keyword>
<keyword id="KW-0540">Nuclease</keyword>
<keyword id="KW-1185">Reference proteome</keyword>
<keyword id="KW-0964">Secreted</keyword>
<keyword id="KW-0800">Toxin</keyword>
<name>YOKI_BACSU</name>
<reference key="1">
    <citation type="journal article" date="1997" name="Nature">
        <title>The complete genome sequence of the Gram-positive bacterium Bacillus subtilis.</title>
        <authorList>
            <person name="Kunst F."/>
            <person name="Ogasawara N."/>
            <person name="Moszer I."/>
            <person name="Albertini A.M."/>
            <person name="Alloni G."/>
            <person name="Azevedo V."/>
            <person name="Bertero M.G."/>
            <person name="Bessieres P."/>
            <person name="Bolotin A."/>
            <person name="Borchert S."/>
            <person name="Borriss R."/>
            <person name="Boursier L."/>
            <person name="Brans A."/>
            <person name="Braun M."/>
            <person name="Brignell S.C."/>
            <person name="Bron S."/>
            <person name="Brouillet S."/>
            <person name="Bruschi C.V."/>
            <person name="Caldwell B."/>
            <person name="Capuano V."/>
            <person name="Carter N.M."/>
            <person name="Choi S.-K."/>
            <person name="Codani J.-J."/>
            <person name="Connerton I.F."/>
            <person name="Cummings N.J."/>
            <person name="Daniel R.A."/>
            <person name="Denizot F."/>
            <person name="Devine K.M."/>
            <person name="Duesterhoeft A."/>
            <person name="Ehrlich S.D."/>
            <person name="Emmerson P.T."/>
            <person name="Entian K.-D."/>
            <person name="Errington J."/>
            <person name="Fabret C."/>
            <person name="Ferrari E."/>
            <person name="Foulger D."/>
            <person name="Fritz C."/>
            <person name="Fujita M."/>
            <person name="Fujita Y."/>
            <person name="Fuma S."/>
            <person name="Galizzi A."/>
            <person name="Galleron N."/>
            <person name="Ghim S.-Y."/>
            <person name="Glaser P."/>
            <person name="Goffeau A."/>
            <person name="Golightly E.J."/>
            <person name="Grandi G."/>
            <person name="Guiseppi G."/>
            <person name="Guy B.J."/>
            <person name="Haga K."/>
            <person name="Haiech J."/>
            <person name="Harwood C.R."/>
            <person name="Henaut A."/>
            <person name="Hilbert H."/>
            <person name="Holsappel S."/>
            <person name="Hosono S."/>
            <person name="Hullo M.-F."/>
            <person name="Itaya M."/>
            <person name="Jones L.-M."/>
            <person name="Joris B."/>
            <person name="Karamata D."/>
            <person name="Kasahara Y."/>
            <person name="Klaerr-Blanchard M."/>
            <person name="Klein C."/>
            <person name="Kobayashi Y."/>
            <person name="Koetter P."/>
            <person name="Koningstein G."/>
            <person name="Krogh S."/>
            <person name="Kumano M."/>
            <person name="Kurita K."/>
            <person name="Lapidus A."/>
            <person name="Lardinois S."/>
            <person name="Lauber J."/>
            <person name="Lazarevic V."/>
            <person name="Lee S.-M."/>
            <person name="Levine A."/>
            <person name="Liu H."/>
            <person name="Masuda S."/>
            <person name="Mauel C."/>
            <person name="Medigue C."/>
            <person name="Medina N."/>
            <person name="Mellado R.P."/>
            <person name="Mizuno M."/>
            <person name="Moestl D."/>
            <person name="Nakai S."/>
            <person name="Noback M."/>
            <person name="Noone D."/>
            <person name="O'Reilly M."/>
            <person name="Ogawa K."/>
            <person name="Ogiwara A."/>
            <person name="Oudega B."/>
            <person name="Park S.-H."/>
            <person name="Parro V."/>
            <person name="Pohl T.M."/>
            <person name="Portetelle D."/>
            <person name="Porwollik S."/>
            <person name="Prescott A.M."/>
            <person name="Presecan E."/>
            <person name="Pujic P."/>
            <person name="Purnelle B."/>
            <person name="Rapoport G."/>
            <person name="Rey M."/>
            <person name="Reynolds S."/>
            <person name="Rieger M."/>
            <person name="Rivolta C."/>
            <person name="Rocha E."/>
            <person name="Roche B."/>
            <person name="Rose M."/>
            <person name="Sadaie Y."/>
            <person name="Sato T."/>
            <person name="Scanlan E."/>
            <person name="Schleich S."/>
            <person name="Schroeter R."/>
            <person name="Scoffone F."/>
            <person name="Sekiguchi J."/>
            <person name="Sekowska A."/>
            <person name="Seror S.J."/>
            <person name="Serror P."/>
            <person name="Shin B.-S."/>
            <person name="Soldo B."/>
            <person name="Sorokin A."/>
            <person name="Tacconi E."/>
            <person name="Takagi T."/>
            <person name="Takahashi H."/>
            <person name="Takemaru K."/>
            <person name="Takeuchi M."/>
            <person name="Tamakoshi A."/>
            <person name="Tanaka T."/>
            <person name="Terpstra P."/>
            <person name="Tognoni A."/>
            <person name="Tosato V."/>
            <person name="Uchiyama S."/>
            <person name="Vandenbol M."/>
            <person name="Vannier F."/>
            <person name="Vassarotti A."/>
            <person name="Viari A."/>
            <person name="Wambutt R."/>
            <person name="Wedler E."/>
            <person name="Wedler H."/>
            <person name="Weitzenegger T."/>
            <person name="Winters P."/>
            <person name="Wipat A."/>
            <person name="Yamamoto H."/>
            <person name="Yamane K."/>
            <person name="Yasumoto K."/>
            <person name="Yata K."/>
            <person name="Yoshida K."/>
            <person name="Yoshikawa H.-F."/>
            <person name="Zumstein E."/>
            <person name="Yoshikawa H."/>
            <person name="Danchin A."/>
        </authorList>
    </citation>
    <scope>NUCLEOTIDE SEQUENCE [LARGE SCALE GENOMIC DNA]</scope>
    <source>
        <strain>168</strain>
    </source>
</reference>
<reference key="2">
    <citation type="journal article" date="2009" name="Microbiology">
        <title>From a consortium sequence to a unified sequence: the Bacillus subtilis 168 reference genome a decade later.</title>
        <authorList>
            <person name="Barbe V."/>
            <person name="Cruveiller S."/>
            <person name="Kunst F."/>
            <person name="Lenoble P."/>
            <person name="Meurice G."/>
            <person name="Sekowska A."/>
            <person name="Vallenet D."/>
            <person name="Wang T."/>
            <person name="Moszer I."/>
            <person name="Medigue C."/>
            <person name="Danchin A."/>
        </authorList>
    </citation>
    <scope>SEQUENCE REVISION TO 49</scope>
</reference>
<reference key="3">
    <citation type="journal article" date="2012" name="FEBS Lett.">
        <title>A novel family of toxin/antitoxin proteins in Bacillus species.</title>
        <authorList>
            <person name="Holberger L.E."/>
            <person name="Garza-Sanchez F."/>
            <person name="Lamoureux J."/>
            <person name="Low D.A."/>
            <person name="Hayes C.S."/>
        </authorList>
    </citation>
    <scope>FUNCTION AS A TOXIN</scope>
    <scope>EXPRESSION IN E.COLI</scope>
    <source>
        <strain>168</strain>
    </source>
</reference>
<reference key="4">
    <citation type="journal article" date="2021" name="PLoS Genet.">
        <title>Diverse LXG toxin and antitoxin systems specifically mediate intraspecies competition in Bacillus subtilis biofilms.</title>
        <authorList>
            <person name="Kobayashi K."/>
        </authorList>
    </citation>
    <scope>FUNCTION AS A TOXIN</scope>
    <scope>FUNCTION AS A DNASE</scope>
    <scope>SUBCELLULAR LOCATION</scope>
    <scope>INDUCTION</scope>
    <scope>DISRUPTION PHENOTYPE</scope>
    <source>
        <strain>168 / Marburg / ATCC 6051 / DSM 10 / JCM 1465 / NBRC 13719 / NCIMB 3610 / NRRL NRS-744 / VKM B-501</strain>
    </source>
</reference>
<gene>
    <name type="primary">yokI</name>
    <name type="ordered locus">BSU21580</name>
</gene>
<accession>O31998</accession>
<organism>
    <name type="scientific">Bacillus subtilis (strain 168)</name>
    <dbReference type="NCBI Taxonomy" id="224308"/>
    <lineage>
        <taxon>Bacteria</taxon>
        <taxon>Bacillati</taxon>
        <taxon>Bacillota</taxon>
        <taxon>Bacilli</taxon>
        <taxon>Bacillales</taxon>
        <taxon>Bacillaceae</taxon>
        <taxon>Bacillus</taxon>
    </lineage>
</organism>
<comment type="function">
    <text evidence="3 4">Toxic component of one of 6 LXG toxin-immunity modules in this strain. They promote kin selection, mediate competition in biofilms, and drive spatial segregation of different strains, indicating that LXG toxins may help avoid warfare between strains in biofilms. Mediates intercellular competition during biofilm formation; disruption of the operon disadvantages the bacteria, but overexpression of the cognate immunity protein restores growth in competition with wild-type. Overexpression alone in situ causes growth arrest but not cell lysis, a large decrease in chromosomal DNA content and the production of anucleate cells. No effect is seen on rRNA. Co-overexpression with cognate immunity protein YokJ does not cause growth arrest. The toxic effect is dependent on the epsA and tapA operons which are required for biofilm formation (PubMed:34280190). The C-terminus (residues 449-571) inhibits growth upon expression in E.coli which is neutralized by cognate immunity protein YokJ, but not by immunity proteins specific to other toxins with the LXG domain (PubMed:22200572).</text>
</comment>
<comment type="subunit">
    <text evidence="7">Probably interacts with cognate immunity protein YokJ but not with non-cognate immunity proteins. The interaction inhibits the toxic activity of YokJ (Probable).</text>
</comment>
<comment type="subcellular location">
    <subcellularLocation>
        <location evidence="9">Secreted</location>
    </subcellularLocation>
    <text evidence="4">Delivery to target cells requires the type VII secretion system (T7SS) and YukE.</text>
</comment>
<comment type="induction">
    <text evidence="4">Expressed on rich and minimal solid media likely in early stationary phase; not dependent on DegSU. Not expressed in liquid LB, but only under conditions that promote biofilm formation.</text>
</comment>
<comment type="disruption phenotype">
    <text evidence="4">Deletion of the yokI-yokJ operon has no visible growth phenotype, however it is out-competed by wild-type cells.</text>
</comment>
<comment type="similarity">
    <text evidence="5">In the N-terminal section; belongs to the LXG family.</text>
</comment>
<comment type="caution">
    <text evidence="8">Was originally suggested to be an RNase.</text>
</comment>
<sequence length="571" mass="64261">MKVFEADSLLSEADKRTKEYKELRSQMVKLKKAFKAVADLDDSKFSGKGADNIKAFYHDHVGVTDQWIDLIDMKIVFLSSISAKLEDAKMSDAYIEESFLEHELVNAYTKSKSIMSEQKKAMKDILNDINDILPLEIFSTEDFKDKLSSADDKREKTIDKINKLDEDLKTEYAETEQNEQFIQQDFKKLQESTGKGKNATPIHYSAKAYRESDIHKKKGDIEQHSEAYLTVKKEEAKEREIKELKKKLNDGVSDPDEYLEIAKKVGYENLEPAQVQLAVQIEQAKQLEGAGEITWDIVKGVGVGLYDVGKDTVTGLWDFITDPGETLSALGNAVIHPVKTYDAISAAIEESYQKDMVNGDAYSRSRWVTYAIGSVAAAVIGTKGAGAINKADAAGKVINKASQAGKKIKDVKIPDLLPYNPKYDLAMAGDVPYNVVDGENLKNQLMSFAKGSDKEVKPFDVVDYRPSNSPLENHHGVMDVWAKHNVPNYVSRGSNTPTVALTKEQHNATKKVYREWLFEKTGKKVGGKVNWKEVSPREIQELTEKMFDAANVPKEARQQYYNAFNQYNFRK</sequence>
<protein>
    <recommendedName>
        <fullName evidence="5">Toxin YokI</fullName>
    </recommendedName>
    <alternativeName>
        <fullName evidence="6">DNase YokL</fullName>
    </alternativeName>
    <alternativeName>
        <fullName>SPbeta prophage-derived protein YokI</fullName>
    </alternativeName>
</protein>
<dbReference type="EMBL" id="AL009126">
    <property type="protein sequence ID" value="CAB14076.2"/>
    <property type="molecule type" value="Genomic_DNA"/>
</dbReference>
<dbReference type="RefSeq" id="NP_390041.2">
    <property type="nucleotide sequence ID" value="NC_000964.3"/>
</dbReference>
<dbReference type="RefSeq" id="WP_004398855.1">
    <property type="nucleotide sequence ID" value="NZ_OZ025638.1"/>
</dbReference>
<dbReference type="FunCoup" id="O31998">
    <property type="interactions" value="17"/>
</dbReference>
<dbReference type="STRING" id="224308.BSU21580"/>
<dbReference type="PaxDb" id="224308-BSU21580"/>
<dbReference type="EnsemblBacteria" id="CAB14076">
    <property type="protein sequence ID" value="CAB14076"/>
    <property type="gene ID" value="BSU_21580"/>
</dbReference>
<dbReference type="GeneID" id="939115"/>
<dbReference type="KEGG" id="bsu:BSU21580"/>
<dbReference type="PATRIC" id="fig|224308.179.peg.2356"/>
<dbReference type="eggNOG" id="COG5444">
    <property type="taxonomic scope" value="Bacteria"/>
</dbReference>
<dbReference type="InParanoid" id="O31998"/>
<dbReference type="OrthoDB" id="7182479at2"/>
<dbReference type="PhylomeDB" id="O31998"/>
<dbReference type="BioCyc" id="BSUB:BSU21580-MONOMER"/>
<dbReference type="Proteomes" id="UP000001570">
    <property type="component" value="Chromosome"/>
</dbReference>
<dbReference type="GO" id="GO:0005576">
    <property type="term" value="C:extracellular region"/>
    <property type="evidence" value="ECO:0007669"/>
    <property type="project" value="UniProtKB-SubCell"/>
</dbReference>
<dbReference type="GO" id="GO:0004518">
    <property type="term" value="F:nuclease activity"/>
    <property type="evidence" value="ECO:0007669"/>
    <property type="project" value="UniProtKB-KW"/>
</dbReference>
<dbReference type="GO" id="GO:0090729">
    <property type="term" value="F:toxin activity"/>
    <property type="evidence" value="ECO:0007669"/>
    <property type="project" value="UniProtKB-KW"/>
</dbReference>
<dbReference type="InterPro" id="IPR051768">
    <property type="entry name" value="Bact_secretion_toxin"/>
</dbReference>
<dbReference type="InterPro" id="IPR006829">
    <property type="entry name" value="LXG_dom"/>
</dbReference>
<dbReference type="InterPro" id="IPR028900">
    <property type="entry name" value="Tox-SHH_dom"/>
</dbReference>
<dbReference type="PANTHER" id="PTHR34976">
    <property type="entry name" value="RIBONUCLEASE YQCG-RELATED"/>
    <property type="match status" value="1"/>
</dbReference>
<dbReference type="PANTHER" id="PTHR34976:SF2">
    <property type="entry name" value="TYPE VII SECRETION SYSTEM PROTEIN ESSD"/>
    <property type="match status" value="1"/>
</dbReference>
<dbReference type="Pfam" id="PF04740">
    <property type="entry name" value="LXG"/>
    <property type="match status" value="1"/>
</dbReference>
<dbReference type="Pfam" id="PF15652">
    <property type="entry name" value="Tox-SHH"/>
    <property type="match status" value="1"/>
</dbReference>
<dbReference type="PROSITE" id="PS51756">
    <property type="entry name" value="LXG"/>
    <property type="match status" value="1"/>
</dbReference>
<proteinExistence type="evidence at protein level"/>
<evidence type="ECO:0000255" key="1"/>
<evidence type="ECO:0000255" key="2">
    <source>
        <dbReference type="PROSITE-ProRule" id="PRU01092"/>
    </source>
</evidence>
<evidence type="ECO:0000269" key="3">
    <source>
    </source>
</evidence>
<evidence type="ECO:0000269" key="4">
    <source>
    </source>
</evidence>
<evidence type="ECO:0000303" key="5">
    <source>
    </source>
</evidence>
<evidence type="ECO:0000303" key="6">
    <source>
    </source>
</evidence>
<evidence type="ECO:0000305" key="7"/>
<evidence type="ECO:0000305" key="8">
    <source>
    </source>
</evidence>
<evidence type="ECO:0000305" key="9">
    <source>
    </source>
</evidence>